<gene>
    <name evidence="1" type="primary">soxA</name>
    <name type="synonym">solA</name>
    <name type="ordered locus">SAV_6950</name>
</gene>
<accession>Q827H4</accession>
<comment type="function">
    <text evidence="1">Catalyzes the oxidative demethylation of sarcosine.</text>
</comment>
<comment type="catalytic activity">
    <reaction evidence="1">
        <text>sarcosine + O2 + H2O = formaldehyde + glycine + H2O2</text>
        <dbReference type="Rhea" id="RHEA:13313"/>
        <dbReference type="ChEBI" id="CHEBI:15377"/>
        <dbReference type="ChEBI" id="CHEBI:15379"/>
        <dbReference type="ChEBI" id="CHEBI:16240"/>
        <dbReference type="ChEBI" id="CHEBI:16842"/>
        <dbReference type="ChEBI" id="CHEBI:57305"/>
        <dbReference type="ChEBI" id="CHEBI:57433"/>
        <dbReference type="EC" id="1.5.3.1"/>
    </reaction>
</comment>
<comment type="cofactor">
    <cofactor evidence="1">
        <name>FAD</name>
        <dbReference type="ChEBI" id="CHEBI:57692"/>
    </cofactor>
    <text evidence="1">Binds 1 FAD per subunit.</text>
</comment>
<comment type="subunit">
    <text evidence="1">Monomer.</text>
</comment>
<comment type="subcellular location">
    <subcellularLocation>
        <location evidence="1">Cytoplasm</location>
    </subcellularLocation>
</comment>
<comment type="similarity">
    <text evidence="1">Belongs to the MSOX/MTOX family. MSOX subfamily.</text>
</comment>
<sequence length="384" mass="42167">MSPTYDVIVIGLGGMGSAAAHHLSARGARVLGLEKFGPVHNRGSSHGGSRITRQSYFEDPAYVPLLLRSYELYEEVERSTGREVATLSGGVMVGRPDSLTVAGSLRSATQWDLPHEMLDAKEIRRRFPTLNPSNDEVALYEKKAGLVRPENMVAAHLQLATRQGAELHFEEPMTRWEPYRDGVRVHTAENTYTAGQLVICPGAWAPQLLTDLGVPFTIERQVMYWFQPRHGVGPFRPENHPIYIWEDAEGVQVYGFPSIDGPDLGAKVAFFRKGVVCTPETIDRTVHDHEVQAMADHMSRCIPDLPGTFLKAATCMYSNTPDEHFVIARHPAHPDSVTVACGFSGHGFKFVPVVGEIVADLALTGTTAHPIGLFDPRRLAAAPA</sequence>
<proteinExistence type="inferred from homology"/>
<feature type="chain" id="PRO_0000213763" description="Monomeric sarcosine oxidase">
    <location>
        <begin position="1"/>
        <end position="384"/>
    </location>
</feature>
<feature type="binding site" evidence="1">
    <location>
        <begin position="6"/>
        <end position="36"/>
    </location>
    <ligand>
        <name>FAD</name>
        <dbReference type="ChEBI" id="CHEBI:57692"/>
    </ligand>
</feature>
<feature type="modified residue" description="S-8alpha-FAD cysteine" evidence="1">
    <location>
        <position position="315"/>
    </location>
</feature>
<protein>
    <recommendedName>
        <fullName evidence="1">Monomeric sarcosine oxidase</fullName>
        <shortName evidence="1">MSOX</shortName>
        <ecNumber evidence="1">1.5.3.1</ecNumber>
    </recommendedName>
</protein>
<evidence type="ECO:0000255" key="1">
    <source>
        <dbReference type="HAMAP-Rule" id="MF_00516"/>
    </source>
</evidence>
<reference key="1">
    <citation type="journal article" date="2001" name="Proc. Natl. Acad. Sci. U.S.A.">
        <title>Genome sequence of an industrial microorganism Streptomyces avermitilis: deducing the ability of producing secondary metabolites.</title>
        <authorList>
            <person name="Omura S."/>
            <person name="Ikeda H."/>
            <person name="Ishikawa J."/>
            <person name="Hanamoto A."/>
            <person name="Takahashi C."/>
            <person name="Shinose M."/>
            <person name="Takahashi Y."/>
            <person name="Horikawa H."/>
            <person name="Nakazawa H."/>
            <person name="Osonoe T."/>
            <person name="Kikuchi H."/>
            <person name="Shiba T."/>
            <person name="Sakaki Y."/>
            <person name="Hattori M."/>
        </authorList>
    </citation>
    <scope>NUCLEOTIDE SEQUENCE [LARGE SCALE GENOMIC DNA]</scope>
    <source>
        <strain>ATCC 31267 / DSM 46492 / JCM 5070 / NBRC 14893 / NCIMB 12804 / NRRL 8165 / MA-4680</strain>
    </source>
</reference>
<reference key="2">
    <citation type="journal article" date="2003" name="Nat. Biotechnol.">
        <title>Complete genome sequence and comparative analysis of the industrial microorganism Streptomyces avermitilis.</title>
        <authorList>
            <person name="Ikeda H."/>
            <person name="Ishikawa J."/>
            <person name="Hanamoto A."/>
            <person name="Shinose M."/>
            <person name="Kikuchi H."/>
            <person name="Shiba T."/>
            <person name="Sakaki Y."/>
            <person name="Hattori M."/>
            <person name="Omura S."/>
        </authorList>
    </citation>
    <scope>NUCLEOTIDE SEQUENCE [LARGE SCALE GENOMIC DNA]</scope>
    <source>
        <strain>ATCC 31267 / DSM 46492 / JCM 5070 / NBRC 14893 / NCIMB 12804 / NRRL 8165 / MA-4680</strain>
    </source>
</reference>
<name>MSOX_STRAW</name>
<organism>
    <name type="scientific">Streptomyces avermitilis (strain ATCC 31267 / DSM 46492 / JCM 5070 / NBRC 14893 / NCIMB 12804 / NRRL 8165 / MA-4680)</name>
    <dbReference type="NCBI Taxonomy" id="227882"/>
    <lineage>
        <taxon>Bacteria</taxon>
        <taxon>Bacillati</taxon>
        <taxon>Actinomycetota</taxon>
        <taxon>Actinomycetes</taxon>
        <taxon>Kitasatosporales</taxon>
        <taxon>Streptomycetaceae</taxon>
        <taxon>Streptomyces</taxon>
    </lineage>
</organism>
<dbReference type="EC" id="1.5.3.1" evidence="1"/>
<dbReference type="EMBL" id="BA000030">
    <property type="protein sequence ID" value="BAC74661.1"/>
    <property type="molecule type" value="Genomic_DNA"/>
</dbReference>
<dbReference type="RefSeq" id="WP_010988347.1">
    <property type="nucleotide sequence ID" value="NZ_JZJK01000082.1"/>
</dbReference>
<dbReference type="SMR" id="Q827H4"/>
<dbReference type="GeneID" id="41544023"/>
<dbReference type="KEGG" id="sma:SAVERM_6950"/>
<dbReference type="eggNOG" id="COG0665">
    <property type="taxonomic scope" value="Bacteria"/>
</dbReference>
<dbReference type="HOGENOM" id="CLU_007884_2_1_11"/>
<dbReference type="OrthoDB" id="9806452at2"/>
<dbReference type="Proteomes" id="UP000000428">
    <property type="component" value="Chromosome"/>
</dbReference>
<dbReference type="GO" id="GO:0005737">
    <property type="term" value="C:cytoplasm"/>
    <property type="evidence" value="ECO:0007669"/>
    <property type="project" value="UniProtKB-SubCell"/>
</dbReference>
<dbReference type="GO" id="GO:0050660">
    <property type="term" value="F:flavin adenine dinucleotide binding"/>
    <property type="evidence" value="ECO:0007669"/>
    <property type="project" value="InterPro"/>
</dbReference>
<dbReference type="GO" id="GO:0008115">
    <property type="term" value="F:sarcosine oxidase activity"/>
    <property type="evidence" value="ECO:0007669"/>
    <property type="project" value="UniProtKB-UniRule"/>
</dbReference>
<dbReference type="Gene3D" id="3.30.9.10">
    <property type="entry name" value="D-Amino Acid Oxidase, subunit A, domain 2"/>
    <property type="match status" value="1"/>
</dbReference>
<dbReference type="Gene3D" id="3.50.50.60">
    <property type="entry name" value="FAD/NAD(P)-binding domain"/>
    <property type="match status" value="1"/>
</dbReference>
<dbReference type="HAMAP" id="MF_00516">
    <property type="entry name" value="MSOX"/>
    <property type="match status" value="1"/>
</dbReference>
<dbReference type="InterPro" id="IPR002204">
    <property type="entry name" value="3-OH-isobutyrate_DH-rel_CS"/>
</dbReference>
<dbReference type="InterPro" id="IPR006076">
    <property type="entry name" value="FAD-dep_OxRdtase"/>
</dbReference>
<dbReference type="InterPro" id="IPR036188">
    <property type="entry name" value="FAD/NAD-bd_sf"/>
</dbReference>
<dbReference type="InterPro" id="IPR045170">
    <property type="entry name" value="MTOX"/>
</dbReference>
<dbReference type="InterPro" id="IPR006281">
    <property type="entry name" value="SoxA_mon"/>
</dbReference>
<dbReference type="NCBIfam" id="NF008425">
    <property type="entry name" value="PRK11259.1"/>
    <property type="match status" value="1"/>
</dbReference>
<dbReference type="PANTHER" id="PTHR10961:SF7">
    <property type="entry name" value="FAD DEPENDENT OXIDOREDUCTASE DOMAIN-CONTAINING PROTEIN"/>
    <property type="match status" value="1"/>
</dbReference>
<dbReference type="PANTHER" id="PTHR10961">
    <property type="entry name" value="PEROXISOMAL SARCOSINE OXIDASE"/>
    <property type="match status" value="1"/>
</dbReference>
<dbReference type="Pfam" id="PF01266">
    <property type="entry name" value="DAO"/>
    <property type="match status" value="1"/>
</dbReference>
<dbReference type="SUPFAM" id="SSF54373">
    <property type="entry name" value="FAD-linked reductases, C-terminal domain"/>
    <property type="match status" value="1"/>
</dbReference>
<dbReference type="SUPFAM" id="SSF51905">
    <property type="entry name" value="FAD/NAD(P)-binding domain"/>
    <property type="match status" value="1"/>
</dbReference>
<keyword id="KW-0963">Cytoplasm</keyword>
<keyword id="KW-0274">FAD</keyword>
<keyword id="KW-0285">Flavoprotein</keyword>
<keyword id="KW-0560">Oxidoreductase</keyword>
<keyword id="KW-1185">Reference proteome</keyword>